<proteinExistence type="inferred from homology"/>
<gene>
    <name type="primary">nodA</name>
    <name type="ordered locus">mlr8755</name>
</gene>
<comment type="function">
    <text evidence="1">N-acyltransferase required for nodulation. Acts in the production of a small, heat-stable compound (Nod) that stimulates mitosis in various plant protoplasts (By similarity).</text>
</comment>
<comment type="subcellular location">
    <subcellularLocation>
        <location evidence="1">Cytoplasm</location>
    </subcellularLocation>
</comment>
<comment type="similarity">
    <text evidence="2">Belongs to the NodA family.</text>
</comment>
<comment type="sequence caution" evidence="2">
    <conflict type="erroneous initiation">
        <sequence resource="EMBL-CDS" id="BAB52499"/>
    </conflict>
</comment>
<name>NODA_RHILO</name>
<organism>
    <name type="scientific">Mesorhizobium japonicum (strain LMG 29417 / CECT 9101 / MAFF 303099)</name>
    <name type="common">Mesorhizobium loti (strain MAFF 303099)</name>
    <dbReference type="NCBI Taxonomy" id="266835"/>
    <lineage>
        <taxon>Bacteria</taxon>
        <taxon>Pseudomonadati</taxon>
        <taxon>Pseudomonadota</taxon>
        <taxon>Alphaproteobacteria</taxon>
        <taxon>Hyphomicrobiales</taxon>
        <taxon>Phyllobacteriaceae</taxon>
        <taxon>Mesorhizobium</taxon>
    </lineage>
</organism>
<feature type="chain" id="PRO_0000196339" description="Nodulation protein A">
    <location>
        <begin position="1"/>
        <end position="197"/>
    </location>
</feature>
<feature type="sequence conflict" description="In Ref. 1; AAB47351." evidence="2" ref="1">
    <original>P</original>
    <variation>S</variation>
    <location>
        <position position="18"/>
    </location>
</feature>
<feature type="sequence conflict" description="In Ref. 2; BAB52499." evidence="2" ref="2">
    <original>E</original>
    <variation>A</variation>
    <location>
        <position position="43"/>
    </location>
</feature>
<feature type="sequence conflict" description="In Ref. 1; AAB47351." evidence="2" ref="1">
    <original>LRV</original>
    <variation>VRA</variation>
    <location>
        <begin position="55"/>
        <end position="57"/>
    </location>
</feature>
<feature type="sequence conflict" description="In Ref. 2; BAB52499." evidence="2" ref="2">
    <original>Y</original>
    <variation>R</variation>
    <location>
        <position position="60"/>
    </location>
</feature>
<feature type="sequence conflict" description="In Ref. 1; AAB47351." evidence="2" ref="1">
    <original>LGL</original>
    <variation>MGV</variation>
    <location>
        <begin position="69"/>
        <end position="71"/>
    </location>
</feature>
<feature type="sequence conflict" description="In Ref. 2; BAB52499." evidence="2" ref="2">
    <original>V</original>
    <variation>D</variation>
    <location>
        <position position="81"/>
    </location>
</feature>
<feature type="sequence conflict" description="In Ref. 1; AAB47351." evidence="2" ref="1">
    <original>A</original>
    <variation>G</variation>
    <location>
        <position position="103"/>
    </location>
</feature>
<feature type="sequence conflict" description="In Ref. 1; AAB47351." evidence="2" ref="1">
    <original>S</original>
    <variation>T</variation>
    <location>
        <position position="124"/>
    </location>
</feature>
<feature type="sequence conflict" description="In Ref. 1; AAB47351." evidence="2" ref="1">
    <original>P</original>
    <variation>Q</variation>
    <location>
        <position position="127"/>
    </location>
</feature>
<feature type="sequence conflict" description="In Ref. 1; AAB47351." evidence="2" ref="1">
    <original>S</original>
    <variation>G</variation>
    <location>
        <position position="134"/>
    </location>
</feature>
<feature type="sequence conflict" description="In Ref. 1; AAB47351." evidence="2" ref="1">
    <original>C</original>
    <variation>R</variation>
    <location>
        <position position="137"/>
    </location>
</feature>
<feature type="sequence conflict" description="In Ref. 1; AAB47351." evidence="2" ref="1">
    <original>S</original>
    <variation>T</variation>
    <location>
        <position position="146"/>
    </location>
</feature>
<feature type="sequence conflict" description="In Ref. 1; AAB47351." evidence="2" ref="1">
    <original>H</original>
    <variation>L</variation>
    <location>
        <position position="154"/>
    </location>
</feature>
<feature type="sequence conflict" description="In Ref. 1; AAB47351." evidence="2" ref="1">
    <original>L</original>
    <variation>P</variation>
    <location>
        <position position="159"/>
    </location>
</feature>
<feature type="sequence conflict" description="In Ref. 1; AAB47351." evidence="2" ref="1">
    <original>P</original>
    <variation>YT</variation>
    <location>
        <position position="163"/>
    </location>
</feature>
<feature type="sequence conflict" description="In Ref. 1; AAB47351." evidence="2" ref="1">
    <original>N</original>
    <variation>D</variation>
    <location>
        <position position="169"/>
    </location>
</feature>
<feature type="sequence conflict" description="In Ref. 1; AAB47351." evidence="2" ref="1">
    <original>VL</original>
    <variation>LM</variation>
    <location>
        <begin position="172"/>
        <end position="173"/>
    </location>
</feature>
<sequence length="197" mass="22019">MRPDVQWRLCWENELQLPDHLELSEFFRKTYEPTGAFNGKQFEGGRSWAGARPELRVIGYDVHGVAAHLGLLRRYIKVGDVDLLVAELGLYGVRPDLEGLGIAHSISVMYPVLQQLGVPFAFGSVRPALRNHVSRFCRKGLANILSGVRVRSTHPDVYLDLPPTRVDDNVLVLVLPIGRSMSEWPAGTLIDRNGPEL</sequence>
<dbReference type="EC" id="2.3.1.-"/>
<dbReference type="EMBL" id="L06241">
    <property type="protein sequence ID" value="AAB47351.1"/>
    <property type="molecule type" value="Genomic_DNA"/>
</dbReference>
<dbReference type="EMBL" id="BA000012">
    <property type="protein sequence ID" value="BAB52499.1"/>
    <property type="status" value="ALT_INIT"/>
    <property type="molecule type" value="Genomic_DNA"/>
</dbReference>
<dbReference type="KEGG" id="mlo:mlr8755"/>
<dbReference type="eggNOG" id="COG3153">
    <property type="taxonomic scope" value="Bacteria"/>
</dbReference>
<dbReference type="HOGENOM" id="CLU_098284_0_0_5"/>
<dbReference type="Proteomes" id="UP000000552">
    <property type="component" value="Chromosome"/>
</dbReference>
<dbReference type="GO" id="GO:0005829">
    <property type="term" value="C:cytosol"/>
    <property type="evidence" value="ECO:0007669"/>
    <property type="project" value="InterPro"/>
</dbReference>
<dbReference type="GO" id="GO:0016746">
    <property type="term" value="F:acyltransferase activity"/>
    <property type="evidence" value="ECO:0007669"/>
    <property type="project" value="UniProtKB-UniRule"/>
</dbReference>
<dbReference type="Gene3D" id="3.40.630.30">
    <property type="match status" value="1"/>
</dbReference>
<dbReference type="HAMAP" id="MF_00084">
    <property type="entry name" value="NodA"/>
    <property type="match status" value="1"/>
</dbReference>
<dbReference type="InterPro" id="IPR003484">
    <property type="entry name" value="NodA"/>
</dbReference>
<dbReference type="InterPro" id="IPR020567">
    <property type="entry name" value="Nodulation_prot_NodA_CS"/>
</dbReference>
<dbReference type="NCBIfam" id="TIGR04245">
    <property type="entry name" value="nodulat_NodA"/>
    <property type="match status" value="1"/>
</dbReference>
<dbReference type="NCBIfam" id="NF001974">
    <property type="entry name" value="PRK00756.1"/>
    <property type="match status" value="1"/>
</dbReference>
<dbReference type="Pfam" id="PF02474">
    <property type="entry name" value="NodA"/>
    <property type="match status" value="1"/>
</dbReference>
<dbReference type="PROSITE" id="PS01349">
    <property type="entry name" value="NODA"/>
    <property type="match status" value="1"/>
</dbReference>
<reference key="1">
    <citation type="journal article" date="1996" name="Mol. Plant Microbe Interact.">
        <title>Novel and complex chromosomal arrangement of Rhizobium loti nodulation genes.</title>
        <authorList>
            <person name="Scott D.B."/>
            <person name="Young C.A."/>
            <person name="Collins-Emerson J.M."/>
            <person name="Terzaghi E.A."/>
            <person name="Rockman E.S."/>
            <person name="Lewis P.E."/>
            <person name="Pankhurst C.E."/>
        </authorList>
    </citation>
    <scope>NUCLEOTIDE SEQUENCE [GENOMIC DNA]</scope>
    <source>
        <strain>NZP 2213</strain>
    </source>
</reference>
<reference key="2">
    <citation type="journal article" date="2000" name="DNA Res.">
        <title>Complete genome structure of the nitrogen-fixing symbiotic bacterium Mesorhizobium loti.</title>
        <authorList>
            <person name="Kaneko T."/>
            <person name="Nakamura Y."/>
            <person name="Sato S."/>
            <person name="Asamizu E."/>
            <person name="Kato T."/>
            <person name="Sasamoto S."/>
            <person name="Watanabe A."/>
            <person name="Idesawa K."/>
            <person name="Ishikawa A."/>
            <person name="Kawashima K."/>
            <person name="Kimura T."/>
            <person name="Kishida Y."/>
            <person name="Kiyokawa C."/>
            <person name="Kohara M."/>
            <person name="Matsumoto M."/>
            <person name="Matsuno A."/>
            <person name="Mochizuki Y."/>
            <person name="Nakayama S."/>
            <person name="Nakazaki N."/>
            <person name="Shimpo S."/>
            <person name="Sugimoto M."/>
            <person name="Takeuchi C."/>
            <person name="Yamada M."/>
            <person name="Tabata S."/>
        </authorList>
    </citation>
    <scope>NUCLEOTIDE SEQUENCE [LARGE SCALE GENOMIC DNA]</scope>
    <source>
        <strain>LMG 29417 / CECT 9101 / MAFF 303099</strain>
    </source>
</reference>
<keyword id="KW-0012">Acyltransferase</keyword>
<keyword id="KW-0963">Cytoplasm</keyword>
<keyword id="KW-0536">Nodulation</keyword>
<keyword id="KW-0808">Transferase</keyword>
<protein>
    <recommendedName>
        <fullName>Nodulation protein A</fullName>
        <ecNumber>2.3.1.-</ecNumber>
    </recommendedName>
</protein>
<evidence type="ECO:0000250" key="1"/>
<evidence type="ECO:0000305" key="2"/>
<accession>Q52839</accession>